<sequence length="86" mass="9677">MAKKSLNETSPVARFEQSLEELEQLVQKMEVGDLSLEQSLTAYERGIGLYRDCQQALEQAELRVRLLTDPARPELAQAFEPPSLDG</sequence>
<organism>
    <name type="scientific">Xanthomonas oryzae pv. oryzae (strain MAFF 311018)</name>
    <dbReference type="NCBI Taxonomy" id="342109"/>
    <lineage>
        <taxon>Bacteria</taxon>
        <taxon>Pseudomonadati</taxon>
        <taxon>Pseudomonadota</taxon>
        <taxon>Gammaproteobacteria</taxon>
        <taxon>Lysobacterales</taxon>
        <taxon>Lysobacteraceae</taxon>
        <taxon>Xanthomonas</taxon>
    </lineage>
</organism>
<keyword id="KW-0963">Cytoplasm</keyword>
<keyword id="KW-0269">Exonuclease</keyword>
<keyword id="KW-0378">Hydrolase</keyword>
<keyword id="KW-0540">Nuclease</keyword>
<reference key="1">
    <citation type="journal article" date="2005" name="Jpn. Agric. Res. Q.">
        <title>Genome sequence of Xanthomonas oryzae pv. oryzae suggests contribution of large numbers of effector genes and insertion sequences to its race diversity.</title>
        <authorList>
            <person name="Ochiai H."/>
            <person name="Inoue Y."/>
            <person name="Takeya M."/>
            <person name="Sasaki A."/>
            <person name="Kaku H."/>
        </authorList>
    </citation>
    <scope>NUCLEOTIDE SEQUENCE [LARGE SCALE GENOMIC DNA]</scope>
    <source>
        <strain>MAFF 311018</strain>
    </source>
</reference>
<evidence type="ECO:0000255" key="1">
    <source>
        <dbReference type="HAMAP-Rule" id="MF_00337"/>
    </source>
</evidence>
<protein>
    <recommendedName>
        <fullName evidence="1">Exodeoxyribonuclease 7 small subunit</fullName>
        <ecNumber evidence="1">3.1.11.6</ecNumber>
    </recommendedName>
    <alternativeName>
        <fullName evidence="1">Exodeoxyribonuclease VII small subunit</fullName>
        <shortName evidence="1">Exonuclease VII small subunit</shortName>
    </alternativeName>
</protein>
<comment type="function">
    <text evidence="1">Bidirectionally degrades single-stranded DNA into large acid-insoluble oligonucleotides, which are then degraded further into small acid-soluble oligonucleotides.</text>
</comment>
<comment type="catalytic activity">
    <reaction evidence="1">
        <text>Exonucleolytic cleavage in either 5'- to 3'- or 3'- to 5'-direction to yield nucleoside 5'-phosphates.</text>
        <dbReference type="EC" id="3.1.11.6"/>
    </reaction>
</comment>
<comment type="subunit">
    <text evidence="1">Heterooligomer composed of large and small subunits.</text>
</comment>
<comment type="subcellular location">
    <subcellularLocation>
        <location evidence="1">Cytoplasm</location>
    </subcellularLocation>
</comment>
<comment type="similarity">
    <text evidence="1">Belongs to the XseB family.</text>
</comment>
<feature type="chain" id="PRO_0000303770" description="Exodeoxyribonuclease 7 small subunit">
    <location>
        <begin position="1"/>
        <end position="86"/>
    </location>
</feature>
<dbReference type="EC" id="3.1.11.6" evidence="1"/>
<dbReference type="EMBL" id="AP008229">
    <property type="protein sequence ID" value="BAE69876.1"/>
    <property type="molecule type" value="Genomic_DNA"/>
</dbReference>
<dbReference type="RefSeq" id="WP_011259802.1">
    <property type="nucleotide sequence ID" value="NC_007705.1"/>
</dbReference>
<dbReference type="SMR" id="Q2P0Q1"/>
<dbReference type="KEGG" id="xom:XOO3121"/>
<dbReference type="HOGENOM" id="CLU_145918_3_3_6"/>
<dbReference type="GO" id="GO:0005829">
    <property type="term" value="C:cytosol"/>
    <property type="evidence" value="ECO:0007669"/>
    <property type="project" value="TreeGrafter"/>
</dbReference>
<dbReference type="GO" id="GO:0009318">
    <property type="term" value="C:exodeoxyribonuclease VII complex"/>
    <property type="evidence" value="ECO:0007669"/>
    <property type="project" value="InterPro"/>
</dbReference>
<dbReference type="GO" id="GO:0008855">
    <property type="term" value="F:exodeoxyribonuclease VII activity"/>
    <property type="evidence" value="ECO:0007669"/>
    <property type="project" value="UniProtKB-UniRule"/>
</dbReference>
<dbReference type="GO" id="GO:0006308">
    <property type="term" value="P:DNA catabolic process"/>
    <property type="evidence" value="ECO:0007669"/>
    <property type="project" value="UniProtKB-UniRule"/>
</dbReference>
<dbReference type="FunFam" id="1.10.287.1040:FF:000005">
    <property type="entry name" value="Exodeoxyribonuclease 7 small subunit"/>
    <property type="match status" value="1"/>
</dbReference>
<dbReference type="Gene3D" id="1.10.287.1040">
    <property type="entry name" value="Exonuclease VII, small subunit"/>
    <property type="match status" value="1"/>
</dbReference>
<dbReference type="HAMAP" id="MF_00337">
    <property type="entry name" value="Exonuc_7_S"/>
    <property type="match status" value="1"/>
</dbReference>
<dbReference type="InterPro" id="IPR003761">
    <property type="entry name" value="Exonuc_VII_S"/>
</dbReference>
<dbReference type="InterPro" id="IPR037004">
    <property type="entry name" value="Exonuc_VII_ssu_sf"/>
</dbReference>
<dbReference type="NCBIfam" id="NF002140">
    <property type="entry name" value="PRK00977.1-4"/>
    <property type="match status" value="1"/>
</dbReference>
<dbReference type="NCBIfam" id="TIGR01280">
    <property type="entry name" value="xseB"/>
    <property type="match status" value="1"/>
</dbReference>
<dbReference type="PANTHER" id="PTHR34137">
    <property type="entry name" value="EXODEOXYRIBONUCLEASE 7 SMALL SUBUNIT"/>
    <property type="match status" value="1"/>
</dbReference>
<dbReference type="PANTHER" id="PTHR34137:SF1">
    <property type="entry name" value="EXODEOXYRIBONUCLEASE 7 SMALL SUBUNIT"/>
    <property type="match status" value="1"/>
</dbReference>
<dbReference type="Pfam" id="PF02609">
    <property type="entry name" value="Exonuc_VII_S"/>
    <property type="match status" value="1"/>
</dbReference>
<dbReference type="SUPFAM" id="SSF116842">
    <property type="entry name" value="XseB-like"/>
    <property type="match status" value="1"/>
</dbReference>
<gene>
    <name evidence="1" type="primary">xseB</name>
    <name type="ordered locus">XOO3121</name>
</gene>
<accession>Q2P0Q1</accession>
<name>EX7S_XANOM</name>
<proteinExistence type="inferred from homology"/>